<proteinExistence type="uncertain"/>
<organism>
    <name type="scientific">Homo sapiens</name>
    <name type="common">Human</name>
    <dbReference type="NCBI Taxonomy" id="9606"/>
    <lineage>
        <taxon>Eukaryota</taxon>
        <taxon>Metazoa</taxon>
        <taxon>Chordata</taxon>
        <taxon>Craniata</taxon>
        <taxon>Vertebrata</taxon>
        <taxon>Euteleostomi</taxon>
        <taxon>Mammalia</taxon>
        <taxon>Eutheria</taxon>
        <taxon>Euarchontoglires</taxon>
        <taxon>Primates</taxon>
        <taxon>Haplorrhini</taxon>
        <taxon>Catarrhini</taxon>
        <taxon>Hominidae</taxon>
        <taxon>Homo</taxon>
    </lineage>
</organism>
<dbReference type="EC" id="3.1.-.-"/>
<dbReference type="EMBL" id="AC093331">
    <property type="status" value="NOT_ANNOTATED_CDS"/>
    <property type="molecule type" value="Genomic_DNA"/>
</dbReference>
<dbReference type="EMBL" id="AF495523">
    <property type="protein sequence ID" value="AAN77012.1"/>
    <property type="status" value="ALT_SEQ"/>
    <property type="molecule type" value="mRNA"/>
</dbReference>
<dbReference type="EMBL" id="AF023669">
    <property type="protein sequence ID" value="AAC98149.1"/>
    <property type="molecule type" value="Genomic_DNA"/>
</dbReference>
<dbReference type="SMR" id="Q8IX06"/>
<dbReference type="FunCoup" id="Q8IX06">
    <property type="interactions" value="51"/>
</dbReference>
<dbReference type="IntAct" id="Q8IX06">
    <property type="interactions" value="8"/>
</dbReference>
<dbReference type="GlyGen" id="Q8IX06">
    <property type="glycosylation" value="1 site, 1 O-linked glycan (1 site)"/>
</dbReference>
<dbReference type="iPTMnet" id="Q8IX06"/>
<dbReference type="PhosphoSitePlus" id="Q8IX06"/>
<dbReference type="BioMuta" id="HGNC:24660"/>
<dbReference type="DMDM" id="205831276"/>
<dbReference type="jPOST" id="Q8IX06"/>
<dbReference type="MassIVE" id="Q8IX06"/>
<dbReference type="Pumba" id="Q8IX06"/>
<dbReference type="DNASU" id="254958"/>
<dbReference type="AGR" id="HGNC:24660"/>
<dbReference type="GeneCards" id="REXO1L1P"/>
<dbReference type="HGNC" id="HGNC:24660">
    <property type="gene designation" value="REXO1L1P"/>
</dbReference>
<dbReference type="neXtProt" id="NX_Q8IX06"/>
<dbReference type="InParanoid" id="Q8IX06"/>
<dbReference type="OrthoDB" id="6482108at2759"/>
<dbReference type="PAN-GO" id="Q8IX06">
    <property type="GO annotations" value="2 GO annotations based on evolutionary models"/>
</dbReference>
<dbReference type="PhylomeDB" id="Q8IX06"/>
<dbReference type="TreeFam" id="TF331871"/>
<dbReference type="PathwayCommons" id="Q8IX06"/>
<dbReference type="SignaLink" id="Q8IX06"/>
<dbReference type="Pharos" id="Q8IX06">
    <property type="development level" value="Tdark"/>
</dbReference>
<dbReference type="PRO" id="PR:Q8IX06"/>
<dbReference type="Proteomes" id="UP000005640">
    <property type="component" value="Unplaced"/>
</dbReference>
<dbReference type="RNAct" id="Q8IX06">
    <property type="molecule type" value="protein"/>
</dbReference>
<dbReference type="GO" id="GO:0005737">
    <property type="term" value="C:cytoplasm"/>
    <property type="evidence" value="ECO:0007669"/>
    <property type="project" value="UniProtKB-SubCell"/>
</dbReference>
<dbReference type="GO" id="GO:0005634">
    <property type="term" value="C:nucleus"/>
    <property type="evidence" value="ECO:0000318"/>
    <property type="project" value="GO_Central"/>
</dbReference>
<dbReference type="GO" id="GO:0004527">
    <property type="term" value="F:exonuclease activity"/>
    <property type="evidence" value="ECO:0000318"/>
    <property type="project" value="GO_Central"/>
</dbReference>
<dbReference type="GO" id="GO:0003676">
    <property type="term" value="F:nucleic acid binding"/>
    <property type="evidence" value="ECO:0007669"/>
    <property type="project" value="InterPro"/>
</dbReference>
<dbReference type="GO" id="GO:0031125">
    <property type="term" value="P:rRNA 3'-end processing"/>
    <property type="evidence" value="ECO:0000318"/>
    <property type="project" value="GO_Central"/>
</dbReference>
<dbReference type="CDD" id="cd06145">
    <property type="entry name" value="REX1_like"/>
    <property type="match status" value="1"/>
</dbReference>
<dbReference type="FunFam" id="3.30.420.10:FF:000021">
    <property type="entry name" value="RNA exonuclease 1 homolog"/>
    <property type="match status" value="1"/>
</dbReference>
<dbReference type="Gene3D" id="3.30.420.10">
    <property type="entry name" value="Ribonuclease H-like superfamily/Ribonuclease H"/>
    <property type="match status" value="1"/>
</dbReference>
<dbReference type="InterPro" id="IPR013520">
    <property type="entry name" value="Exonuclease_RNaseT/DNA_pol3"/>
</dbReference>
<dbReference type="InterPro" id="IPR034922">
    <property type="entry name" value="REX1-like_exo"/>
</dbReference>
<dbReference type="InterPro" id="IPR031736">
    <property type="entry name" value="REXO1-like_dom"/>
</dbReference>
<dbReference type="InterPro" id="IPR047021">
    <property type="entry name" value="REXO1/3/4-like"/>
</dbReference>
<dbReference type="InterPro" id="IPR012337">
    <property type="entry name" value="RNaseH-like_sf"/>
</dbReference>
<dbReference type="InterPro" id="IPR036397">
    <property type="entry name" value="RNaseH_sf"/>
</dbReference>
<dbReference type="PANTHER" id="PTHR12801:SF22">
    <property type="entry name" value="EXONUCLEASE GOR-RELATED"/>
    <property type="match status" value="1"/>
</dbReference>
<dbReference type="PANTHER" id="PTHR12801">
    <property type="entry name" value="RNA EXONUCLEASE REXO1 / RECO3 FAMILY MEMBER-RELATED"/>
    <property type="match status" value="1"/>
</dbReference>
<dbReference type="Pfam" id="PF15870">
    <property type="entry name" value="EloA-BP1"/>
    <property type="match status" value="2"/>
</dbReference>
<dbReference type="SMART" id="SM00479">
    <property type="entry name" value="EXOIII"/>
    <property type="match status" value="1"/>
</dbReference>
<dbReference type="SUPFAM" id="SSF53098">
    <property type="entry name" value="Ribonuclease H-like"/>
    <property type="match status" value="1"/>
</dbReference>
<name>GOR_HUMAN</name>
<reference key="1">
    <citation type="journal article" date="2006" name="Nature">
        <title>DNA sequence and analysis of human chromosome 8.</title>
        <authorList>
            <person name="Nusbaum C."/>
            <person name="Mikkelsen T.S."/>
            <person name="Zody M.C."/>
            <person name="Asakawa S."/>
            <person name="Taudien S."/>
            <person name="Garber M."/>
            <person name="Kodira C.D."/>
            <person name="Schueler M.G."/>
            <person name="Shimizu A."/>
            <person name="Whittaker C.A."/>
            <person name="Chang J.L."/>
            <person name="Cuomo C.A."/>
            <person name="Dewar K."/>
            <person name="FitzGerald M.G."/>
            <person name="Yang X."/>
            <person name="Allen N.R."/>
            <person name="Anderson S."/>
            <person name="Asakawa T."/>
            <person name="Blechschmidt K."/>
            <person name="Bloom T."/>
            <person name="Borowsky M.L."/>
            <person name="Butler J."/>
            <person name="Cook A."/>
            <person name="Corum B."/>
            <person name="DeArellano K."/>
            <person name="DeCaprio D."/>
            <person name="Dooley K.T."/>
            <person name="Dorris L. III"/>
            <person name="Engels R."/>
            <person name="Gloeckner G."/>
            <person name="Hafez N."/>
            <person name="Hagopian D.S."/>
            <person name="Hall J.L."/>
            <person name="Ishikawa S.K."/>
            <person name="Jaffe D.B."/>
            <person name="Kamat A."/>
            <person name="Kudoh J."/>
            <person name="Lehmann R."/>
            <person name="Lokitsang T."/>
            <person name="Macdonald P."/>
            <person name="Major J.E."/>
            <person name="Matthews C.D."/>
            <person name="Mauceli E."/>
            <person name="Menzel U."/>
            <person name="Mihalev A.H."/>
            <person name="Minoshima S."/>
            <person name="Murayama Y."/>
            <person name="Naylor J.W."/>
            <person name="Nicol R."/>
            <person name="Nguyen C."/>
            <person name="O'Leary S.B."/>
            <person name="O'Neill K."/>
            <person name="Parker S.C.J."/>
            <person name="Polley A."/>
            <person name="Raymond C.K."/>
            <person name="Reichwald K."/>
            <person name="Rodriguez J."/>
            <person name="Sasaki T."/>
            <person name="Schilhabel M."/>
            <person name="Siddiqui R."/>
            <person name="Smith C.L."/>
            <person name="Sneddon T.P."/>
            <person name="Talamas J.A."/>
            <person name="Tenzin P."/>
            <person name="Topham K."/>
            <person name="Venkataraman V."/>
            <person name="Wen G."/>
            <person name="Yamazaki S."/>
            <person name="Young S.K."/>
            <person name="Zeng Q."/>
            <person name="Zimmer A.R."/>
            <person name="Rosenthal A."/>
            <person name="Birren B.W."/>
            <person name="Platzer M."/>
            <person name="Shimizu N."/>
            <person name="Lander E.S."/>
        </authorList>
    </citation>
    <scope>NUCLEOTIDE SEQUENCE [LARGE SCALE GENOMIC DNA]</scope>
</reference>
<reference key="2">
    <citation type="submission" date="2002-03" db="EMBL/GenBank/DDBJ databases">
        <title>A mariner transposon is located near the human GOR gene.</title>
        <authorList>
            <person name="Gomez-Gonzalez O."/>
            <person name="Rodriguez R.E."/>
            <person name="Gonzalez-Sarmiento R."/>
        </authorList>
    </citation>
    <scope>NUCLEOTIDE SEQUENCE [MRNA] OF 154-675</scope>
    <source>
        <tissue>Liver</tissue>
    </source>
</reference>
<reference key="3">
    <citation type="submission" date="1997-09" db="EMBL/GenBank/DDBJ databases">
        <title>Identification of a novel human gene (GOR) localized to 8q13-8q22.</title>
        <authorList>
            <person name="DeBella L.R."/>
            <person name="Schertzer M."/>
            <person name="Wood S."/>
        </authorList>
    </citation>
    <scope>PRELIMINARY NUCLEOTIDE SEQUENCE [GENOMIC DNA] OF 490-658</scope>
</reference>
<reference key="4">
    <citation type="journal article" date="2001" name="Clin. Exp. Immunol.">
        <title>The GOR gene product cannot cross-react with hepatitis C virus in humans.</title>
        <authorList>
            <person name="Koike R."/>
            <person name="Iizuka T."/>
            <person name="Watanabe T."/>
            <person name="Miyasaka N."/>
        </authorList>
    </citation>
    <scope>IDENTIFICATION</scope>
    <scope>SUBCELLULAR LOCATION</scope>
</reference>
<comment type="interaction">
    <interactant intactId="EBI-10262361">
        <id>Q8IX06</id>
    </interactant>
    <interactant intactId="EBI-307352">
        <id>Q04864</id>
        <label>REL</label>
    </interactant>
    <organismsDiffer>false</organismsDiffer>
    <experiments>3</experiments>
</comment>
<comment type="interaction">
    <interactant intactId="EBI-10262361">
        <id>Q8IX06</id>
    </interactant>
    <interactant intactId="EBI-533224">
        <id>P15884</id>
        <label>TCF4</label>
    </interactant>
    <organismsDiffer>false</organismsDiffer>
    <experiments>3</experiments>
</comment>
<comment type="interaction">
    <interactant intactId="EBI-10262361">
        <id>Q8IX06</id>
    </interactant>
    <interactant intactId="EBI-742397">
        <id>Q8IYF3</id>
        <label>TEX11</label>
    </interactant>
    <organismsDiffer>false</organismsDiffer>
    <experiments>3</experiments>
</comment>
<comment type="interaction">
    <interactant intactId="EBI-10262361">
        <id>Q8IX06</id>
    </interactant>
    <interactant intactId="EBI-3650647">
        <id>Q9BUZ4</id>
        <label>TRAF4</label>
    </interactant>
    <organismsDiffer>false</organismsDiffer>
    <experiments>3</experiments>
</comment>
<comment type="subcellular location">
    <subcellularLocation>
        <location evidence="2">Cytoplasm</location>
    </subcellularLocation>
    <subcellularLocation>
        <location evidence="4">Nucleus</location>
    </subcellularLocation>
</comment>
<comment type="similarity">
    <text evidence="3">Belongs to the REXO1/REXO3 family.</text>
</comment>
<comment type="caution">
    <text evidence="4">Could be the product of a pseudogene. N-terminally truncated compared to the protein-coding REXO1 gene. Originally thought to encode human GOR47-1, an antigenic epitope identified from the serum of virus infected chimpanzee (see AC P48778), which was apparently also expressed in human and used in ELISA tests to detect hepatitis C virus infection in patients. It turns out that the peptide identified in chimpanzee cannot be produced by human REXO1L1/GOR gene, due to a premature stop codon in the gene (PubMed:11472404) and therefore the basis of the tests remains unclear. However, the same authors provide evidence of the expression of a different N-terminal peptide from the human REXO1L1/GOR gene, the GOR1-125 antigen (PubMed:11472404).</text>
</comment>
<comment type="sequence caution" evidence="3">
    <conflict type="miscellaneous discrepancy">
        <sequence resource="EMBL-CDS" id="AAN77012"/>
    </conflict>
    <text>Contaminating sequence. Sequence of unknown origin in the N-terminal part.</text>
</comment>
<protein>
    <recommendedName>
        <fullName>Putative exonuclease GOR</fullName>
        <ecNumber>3.1.-.-</ecNumber>
    </recommendedName>
    <alternativeName>
        <fullName>Antigen GOR homolog</fullName>
    </alternativeName>
    <alternativeName>
        <fullName>RNA exonuclease 1 homolog-like 1</fullName>
    </alternativeName>
</protein>
<keyword id="KW-0963">Cytoplasm</keyword>
<keyword id="KW-0269">Exonuclease</keyword>
<keyword id="KW-0378">Hydrolase</keyword>
<keyword id="KW-0540">Nuclease</keyword>
<keyword id="KW-0539">Nucleus</keyword>
<keyword id="KW-1267">Proteomics identification</keyword>
<keyword id="KW-1185">Reference proteome</keyword>
<feature type="chain" id="PRO_0000120938" description="Putative exonuclease GOR">
    <location>
        <begin position="1"/>
        <end position="675"/>
    </location>
</feature>
<feature type="region of interest" description="Disordered" evidence="1">
    <location>
        <begin position="66"/>
        <end position="90"/>
    </location>
</feature>
<feature type="region of interest" description="Disordered" evidence="1">
    <location>
        <begin position="225"/>
        <end position="263"/>
    </location>
</feature>
<feature type="region of interest" description="GOR1-125 epitope">
    <location>
        <begin position="358"/>
        <end position="483"/>
    </location>
</feature>
<feature type="compositionally biased region" description="Basic and acidic residues" evidence="1">
    <location>
        <begin position="66"/>
        <end position="79"/>
    </location>
</feature>
<feature type="sequence conflict" description="In Ref. 2; AAN77012." evidence="3" ref="2">
    <original>A</original>
    <variation>P</variation>
    <location>
        <position position="272"/>
    </location>
</feature>
<feature type="sequence conflict" description="In Ref. 2; AAN77012." evidence="3" ref="2">
    <original>D</original>
    <variation>N</variation>
    <location>
        <position position="635"/>
    </location>
</feature>
<feature type="sequence conflict" description="In Ref. 2; AAN77012." evidence="3" ref="2">
    <original>S</original>
    <variation>N</variation>
    <location>
        <position position="644"/>
    </location>
</feature>
<feature type="sequence conflict" description="In Ref. 2; AAN77012." evidence="3" ref="2">
    <original>A</original>
    <variation>V</variation>
    <location>
        <position position="667"/>
    </location>
</feature>
<sequence>MLRATAPCWFPPGYPEAKKVAEEAALEASRHLGGEQSQAGAPEGSKMLRATAPCWFRPGYPEAKKVAKEAAPEASRHLGAEQSPAGAPEGSKMLRATAPCWFPPGYPEAKKVAEEAALEAPEFPLPSHQPAQSFGLWVPQMHKQASAFVDIQAEPQNRGPAVPPAWPKMVTESCYFPAQRGSACRLPAAPRLTERPSGVRISAPRKRKTIAHSSSPCLVTGYTDAKRTRVASSSQRSRGSKVGRQPGKTRNRSGMACKTTATTSSKRIVRRASLPSLSLKKPIILRSSGCQVPTVLRRGYLQLFTEECLKFCASKQEAEEKALNEEKVAYDCSPNKNRYLNVVLNTLKRLKGLTPSSMPGLSRAALYSRLQEFLLTQDQLKENGYPFPHPERPGGAVLFTGQGKGPGDSSCRVCCRCGTEYLVSSSGRCVRDQLCYYHWGRVRSSQVAGGRVSQYTCCAAAPGSVGCQVAKQHVRDGRKESLDGFVETFKKELSRDAYPGIYALDCEMCYTTHGLELTRVTVVDADMRVVYDTFVKPDNEIVDYNTRFSGVTEADVAKTSITLPQVQAILLSFFSAQTILIGHSLESDLLALKLIHSTVVDTAVLFPHYLGFPYKRSLRNLAADYLAQIIQDSQDGHNSSEDASACLQLVMWKVRQRAQIQPRHRSASPAALACP</sequence>
<accession>Q8IX06</accession>
<accession>A6NK34</accession>
<accession>O95107</accession>
<gene>
    <name type="primary">REXO1L1P</name>
    <name type="synonym">GOR</name>
    <name type="synonym">REXO1L1</name>
</gene>
<evidence type="ECO:0000256" key="1">
    <source>
        <dbReference type="SAM" id="MobiDB-lite"/>
    </source>
</evidence>
<evidence type="ECO:0000269" key="2">
    <source>
    </source>
</evidence>
<evidence type="ECO:0000305" key="3"/>
<evidence type="ECO:0000305" key="4">
    <source>
    </source>
</evidence>